<sequence>MRIKKGDSVLVTTGKDAGKKGKVLRVIPDKNRVVIEGVNRVKKHQKPSRSLPQGGILKIETPLNASNVMLVCSRCNKPTRIAHKIMENGEKVRICKQCGEALD</sequence>
<name>RL24_SYNWW</name>
<comment type="function">
    <text evidence="1">One of two assembly initiator proteins, it binds directly to the 5'-end of the 23S rRNA, where it nucleates assembly of the 50S subunit.</text>
</comment>
<comment type="function">
    <text evidence="1">One of the proteins that surrounds the polypeptide exit tunnel on the outside of the subunit.</text>
</comment>
<comment type="subunit">
    <text evidence="1">Part of the 50S ribosomal subunit.</text>
</comment>
<comment type="similarity">
    <text evidence="1">Belongs to the universal ribosomal protein uL24 family.</text>
</comment>
<keyword id="KW-1185">Reference proteome</keyword>
<keyword id="KW-0687">Ribonucleoprotein</keyword>
<keyword id="KW-0689">Ribosomal protein</keyword>
<keyword id="KW-0694">RNA-binding</keyword>
<keyword id="KW-0699">rRNA-binding</keyword>
<dbReference type="EMBL" id="CP000448">
    <property type="protein sequence ID" value="ABI69613.1"/>
    <property type="molecule type" value="Genomic_DNA"/>
</dbReference>
<dbReference type="RefSeq" id="WP_011641697.1">
    <property type="nucleotide sequence ID" value="NC_008346.1"/>
</dbReference>
<dbReference type="SMR" id="Q0AUJ1"/>
<dbReference type="STRING" id="335541.Swol_2322"/>
<dbReference type="KEGG" id="swo:Swol_2322"/>
<dbReference type="eggNOG" id="COG0198">
    <property type="taxonomic scope" value="Bacteria"/>
</dbReference>
<dbReference type="HOGENOM" id="CLU_093315_2_3_9"/>
<dbReference type="OrthoDB" id="9807419at2"/>
<dbReference type="Proteomes" id="UP000001968">
    <property type="component" value="Chromosome"/>
</dbReference>
<dbReference type="GO" id="GO:1990904">
    <property type="term" value="C:ribonucleoprotein complex"/>
    <property type="evidence" value="ECO:0007669"/>
    <property type="project" value="UniProtKB-KW"/>
</dbReference>
<dbReference type="GO" id="GO:0005840">
    <property type="term" value="C:ribosome"/>
    <property type="evidence" value="ECO:0007669"/>
    <property type="project" value="UniProtKB-KW"/>
</dbReference>
<dbReference type="GO" id="GO:0019843">
    <property type="term" value="F:rRNA binding"/>
    <property type="evidence" value="ECO:0007669"/>
    <property type="project" value="UniProtKB-UniRule"/>
</dbReference>
<dbReference type="GO" id="GO:0003735">
    <property type="term" value="F:structural constituent of ribosome"/>
    <property type="evidence" value="ECO:0007669"/>
    <property type="project" value="InterPro"/>
</dbReference>
<dbReference type="GO" id="GO:0006412">
    <property type="term" value="P:translation"/>
    <property type="evidence" value="ECO:0007669"/>
    <property type="project" value="UniProtKB-UniRule"/>
</dbReference>
<dbReference type="CDD" id="cd06089">
    <property type="entry name" value="KOW_RPL26"/>
    <property type="match status" value="1"/>
</dbReference>
<dbReference type="FunFam" id="2.30.30.30:FF:000004">
    <property type="entry name" value="50S ribosomal protein L24"/>
    <property type="match status" value="1"/>
</dbReference>
<dbReference type="Gene3D" id="2.30.30.30">
    <property type="match status" value="1"/>
</dbReference>
<dbReference type="HAMAP" id="MF_01326_B">
    <property type="entry name" value="Ribosomal_uL24_B"/>
    <property type="match status" value="1"/>
</dbReference>
<dbReference type="InterPro" id="IPR005824">
    <property type="entry name" value="KOW"/>
</dbReference>
<dbReference type="InterPro" id="IPR014722">
    <property type="entry name" value="Rib_uL2_dom2"/>
</dbReference>
<dbReference type="InterPro" id="IPR003256">
    <property type="entry name" value="Ribosomal_uL24"/>
</dbReference>
<dbReference type="InterPro" id="IPR041988">
    <property type="entry name" value="Ribosomal_uL24_KOW"/>
</dbReference>
<dbReference type="InterPro" id="IPR008991">
    <property type="entry name" value="Translation_prot_SH3-like_sf"/>
</dbReference>
<dbReference type="NCBIfam" id="TIGR01079">
    <property type="entry name" value="rplX_bact"/>
    <property type="match status" value="1"/>
</dbReference>
<dbReference type="PANTHER" id="PTHR12903">
    <property type="entry name" value="MITOCHONDRIAL RIBOSOMAL PROTEIN L24"/>
    <property type="match status" value="1"/>
</dbReference>
<dbReference type="Pfam" id="PF00467">
    <property type="entry name" value="KOW"/>
    <property type="match status" value="1"/>
</dbReference>
<dbReference type="Pfam" id="PF17136">
    <property type="entry name" value="ribosomal_L24"/>
    <property type="match status" value="1"/>
</dbReference>
<dbReference type="SMART" id="SM00739">
    <property type="entry name" value="KOW"/>
    <property type="match status" value="1"/>
</dbReference>
<dbReference type="SUPFAM" id="SSF50104">
    <property type="entry name" value="Translation proteins SH3-like domain"/>
    <property type="match status" value="1"/>
</dbReference>
<gene>
    <name evidence="1" type="primary">rplX</name>
    <name type="ordered locus">Swol_2322</name>
</gene>
<proteinExistence type="inferred from homology"/>
<reference key="1">
    <citation type="journal article" date="2010" name="Environ. Microbiol.">
        <title>The genome of Syntrophomonas wolfei: new insights into syntrophic metabolism and biohydrogen production.</title>
        <authorList>
            <person name="Sieber J.R."/>
            <person name="Sims D.R."/>
            <person name="Han C."/>
            <person name="Kim E."/>
            <person name="Lykidis A."/>
            <person name="Lapidus A.L."/>
            <person name="McDonnald E."/>
            <person name="Rohlin L."/>
            <person name="Culley D.E."/>
            <person name="Gunsalus R."/>
            <person name="McInerney M.J."/>
        </authorList>
    </citation>
    <scope>NUCLEOTIDE SEQUENCE [LARGE SCALE GENOMIC DNA]</scope>
    <source>
        <strain>DSM 2245B / Goettingen</strain>
    </source>
</reference>
<organism>
    <name type="scientific">Syntrophomonas wolfei subsp. wolfei (strain DSM 2245B / Goettingen)</name>
    <dbReference type="NCBI Taxonomy" id="335541"/>
    <lineage>
        <taxon>Bacteria</taxon>
        <taxon>Bacillati</taxon>
        <taxon>Bacillota</taxon>
        <taxon>Clostridia</taxon>
        <taxon>Eubacteriales</taxon>
        <taxon>Syntrophomonadaceae</taxon>
        <taxon>Syntrophomonas</taxon>
    </lineage>
</organism>
<accession>Q0AUJ1</accession>
<feature type="chain" id="PRO_1000052331" description="Large ribosomal subunit protein uL24">
    <location>
        <begin position="1"/>
        <end position="103"/>
    </location>
</feature>
<evidence type="ECO:0000255" key="1">
    <source>
        <dbReference type="HAMAP-Rule" id="MF_01326"/>
    </source>
</evidence>
<evidence type="ECO:0000305" key="2"/>
<protein>
    <recommendedName>
        <fullName evidence="1">Large ribosomal subunit protein uL24</fullName>
    </recommendedName>
    <alternativeName>
        <fullName evidence="2">50S ribosomal protein L24</fullName>
    </alternativeName>
</protein>